<reference key="1">
    <citation type="journal article" date="2003" name="Appl. Microbiol. Biotechnol.">
        <title>The Corynebacterium glutamicum genome: features and impacts on biotechnological processes.</title>
        <authorList>
            <person name="Ikeda M."/>
            <person name="Nakagawa S."/>
        </authorList>
    </citation>
    <scope>NUCLEOTIDE SEQUENCE [LARGE SCALE GENOMIC DNA]</scope>
    <source>
        <strain>ATCC 13032 / DSM 20300 / JCM 1318 / BCRC 11384 / CCUG 27702 / LMG 3730 / NBRC 12168 / NCIMB 10025 / NRRL B-2784 / 534</strain>
    </source>
</reference>
<reference key="2">
    <citation type="journal article" date="2003" name="J. Biotechnol.">
        <title>The complete Corynebacterium glutamicum ATCC 13032 genome sequence and its impact on the production of L-aspartate-derived amino acids and vitamins.</title>
        <authorList>
            <person name="Kalinowski J."/>
            <person name="Bathe B."/>
            <person name="Bartels D."/>
            <person name="Bischoff N."/>
            <person name="Bott M."/>
            <person name="Burkovski A."/>
            <person name="Dusch N."/>
            <person name="Eggeling L."/>
            <person name="Eikmanns B.J."/>
            <person name="Gaigalat L."/>
            <person name="Goesmann A."/>
            <person name="Hartmann M."/>
            <person name="Huthmacher K."/>
            <person name="Kraemer R."/>
            <person name="Linke B."/>
            <person name="McHardy A.C."/>
            <person name="Meyer F."/>
            <person name="Moeckel B."/>
            <person name="Pfefferle W."/>
            <person name="Puehler A."/>
            <person name="Rey D.A."/>
            <person name="Rueckert C."/>
            <person name="Rupp O."/>
            <person name="Sahm H."/>
            <person name="Wendisch V.F."/>
            <person name="Wiegraebe I."/>
            <person name="Tauch A."/>
        </authorList>
    </citation>
    <scope>NUCLEOTIDE SEQUENCE [LARGE SCALE GENOMIC DNA]</scope>
    <source>
        <strain>ATCC 13032 / DSM 20300 / JCM 1318 / BCRC 11384 / CCUG 27702 / LMG 3730 / NBRC 12168 / NCIMB 10025 / NRRL B-2784 / 534</strain>
    </source>
</reference>
<reference key="3">
    <citation type="journal article" date="2000" name="Arch. Microbiol.">
        <title>Indole-inducible proteins in bacteria suggest membrane and oxidant toxicity.</title>
        <authorList>
            <person name="Garbe T.R."/>
            <person name="Kobayashi M."/>
            <person name="Yukawa H."/>
        </authorList>
    </citation>
    <scope>PROTEIN SEQUENCE OF 20-49</scope>
    <source>
        <strain>ES</strain>
    </source>
</reference>
<evidence type="ECO:0000255" key="1">
    <source>
        <dbReference type="HAMAP-Rule" id="MF_01824"/>
    </source>
</evidence>
<evidence type="ECO:0000305" key="2"/>
<proteinExistence type="evidence at protein level"/>
<accession>P82134</accession>
<accession>Q8NS91</accession>
<sequence length="317" mass="33313">MTESGSTASPLCGVGSSVMTETQETYQATTRVKRGLADMLKGGVIMDVVTPEQARIAEDAGASAVMALERVPADIRSQGGVARMSDPDLIEGIVNAVSIPVMAKARIGHFVEAQVLEALGVDFIDESEVLSPADYTHHINKWKFDVPFVCGATNLGEALRRITEGAAMIRSKGEAGTGDVSEAVRHLRTIRGDINRLRSLDEDELFVAAKEFQAPYDLVREVASTGKLPVVTFVAGGVATPADAALVRQMGAEGVFVGSGIFKSGNPAARAAAIVKAATLFDDPSVIADVSRGLGEAMVGINVSDVPAPHRLAERGW</sequence>
<keyword id="KW-0903">Direct protein sequencing</keyword>
<keyword id="KW-0456">Lyase</keyword>
<keyword id="KW-0663">Pyridoxal phosphate</keyword>
<keyword id="KW-1185">Reference proteome</keyword>
<keyword id="KW-0704">Schiff base</keyword>
<gene>
    <name evidence="1" type="primary">pdxS</name>
    <name type="ordered locus">Cgl0788</name>
    <name type="ordered locus">cg0898</name>
</gene>
<protein>
    <recommendedName>
        <fullName evidence="1">Pyridoxal 5'-phosphate synthase subunit PdxS</fullName>
        <shortName evidence="1">PLP synthase subunit PdxS</shortName>
        <ecNumber evidence="1">4.3.3.6</ecNumber>
    </recommendedName>
    <alternativeName>
        <fullName evidence="1">Pdx1</fullName>
    </alternativeName>
</protein>
<name>PDXS_CORGL</name>
<dbReference type="EC" id="4.3.3.6" evidence="1"/>
<dbReference type="EMBL" id="BA000036">
    <property type="protein sequence ID" value="BAB98181.1"/>
    <property type="molecule type" value="Genomic_DNA"/>
</dbReference>
<dbReference type="EMBL" id="BX927150">
    <property type="protein sequence ID" value="CAF19493.1"/>
    <property type="status" value="ALT_INIT"/>
    <property type="molecule type" value="Genomic_DNA"/>
</dbReference>
<dbReference type="RefSeq" id="NP_600016.1">
    <property type="nucleotide sequence ID" value="NC_003450.3"/>
</dbReference>
<dbReference type="SMR" id="P82134"/>
<dbReference type="STRING" id="196627.cg0898"/>
<dbReference type="KEGG" id="cgb:cg0898"/>
<dbReference type="KEGG" id="cgl:Cgl0788"/>
<dbReference type="PATRIC" id="fig|196627.13.peg.773"/>
<dbReference type="eggNOG" id="COG0214">
    <property type="taxonomic scope" value="Bacteria"/>
</dbReference>
<dbReference type="HOGENOM" id="CLU_055352_1_0_11"/>
<dbReference type="OrthoDB" id="9772545at2"/>
<dbReference type="BioCyc" id="CORYNE:G18NG-10350-MONOMER"/>
<dbReference type="UniPathway" id="UPA00245"/>
<dbReference type="Proteomes" id="UP000000582">
    <property type="component" value="Chromosome"/>
</dbReference>
<dbReference type="Proteomes" id="UP000001009">
    <property type="component" value="Chromosome"/>
</dbReference>
<dbReference type="GO" id="GO:0036381">
    <property type="term" value="F:pyridoxal 5'-phosphate synthase (glutamine hydrolysing) activity"/>
    <property type="evidence" value="ECO:0007669"/>
    <property type="project" value="UniProtKB-UniRule"/>
</dbReference>
<dbReference type="GO" id="GO:0006520">
    <property type="term" value="P:amino acid metabolic process"/>
    <property type="evidence" value="ECO:0007669"/>
    <property type="project" value="TreeGrafter"/>
</dbReference>
<dbReference type="GO" id="GO:0042823">
    <property type="term" value="P:pyridoxal phosphate biosynthetic process"/>
    <property type="evidence" value="ECO:0007669"/>
    <property type="project" value="UniProtKB-UniRule"/>
</dbReference>
<dbReference type="GO" id="GO:0008615">
    <property type="term" value="P:pyridoxine biosynthetic process"/>
    <property type="evidence" value="ECO:0007669"/>
    <property type="project" value="TreeGrafter"/>
</dbReference>
<dbReference type="CDD" id="cd04727">
    <property type="entry name" value="pdxS"/>
    <property type="match status" value="1"/>
</dbReference>
<dbReference type="FunFam" id="3.20.20.70:FF:000001">
    <property type="entry name" value="Pyridoxine biosynthesis protein PDX1"/>
    <property type="match status" value="1"/>
</dbReference>
<dbReference type="Gene3D" id="3.20.20.70">
    <property type="entry name" value="Aldolase class I"/>
    <property type="match status" value="1"/>
</dbReference>
<dbReference type="HAMAP" id="MF_01824">
    <property type="entry name" value="PdxS"/>
    <property type="match status" value="1"/>
</dbReference>
<dbReference type="InterPro" id="IPR013785">
    <property type="entry name" value="Aldolase_TIM"/>
</dbReference>
<dbReference type="InterPro" id="IPR001852">
    <property type="entry name" value="PdxS/SNZ"/>
</dbReference>
<dbReference type="InterPro" id="IPR033755">
    <property type="entry name" value="PdxS/SNZ_N"/>
</dbReference>
<dbReference type="InterPro" id="IPR011060">
    <property type="entry name" value="RibuloseP-bd_barrel"/>
</dbReference>
<dbReference type="NCBIfam" id="NF003215">
    <property type="entry name" value="PRK04180.1"/>
    <property type="match status" value="1"/>
</dbReference>
<dbReference type="NCBIfam" id="TIGR00343">
    <property type="entry name" value="pyridoxal 5'-phosphate synthase lyase subunit PdxS"/>
    <property type="match status" value="1"/>
</dbReference>
<dbReference type="PANTHER" id="PTHR31829">
    <property type="entry name" value="PYRIDOXAL 5'-PHOSPHATE SYNTHASE SUBUNIT SNZ1-RELATED"/>
    <property type="match status" value="1"/>
</dbReference>
<dbReference type="PANTHER" id="PTHR31829:SF0">
    <property type="entry name" value="PYRIDOXAL 5'-PHOSPHATE SYNTHASE SUBUNIT SNZ1-RELATED"/>
    <property type="match status" value="1"/>
</dbReference>
<dbReference type="Pfam" id="PF01680">
    <property type="entry name" value="SOR_SNZ"/>
    <property type="match status" value="1"/>
</dbReference>
<dbReference type="PIRSF" id="PIRSF029271">
    <property type="entry name" value="Pdx1"/>
    <property type="match status" value="1"/>
</dbReference>
<dbReference type="SUPFAM" id="SSF51366">
    <property type="entry name" value="Ribulose-phoshate binding barrel"/>
    <property type="match status" value="1"/>
</dbReference>
<dbReference type="PROSITE" id="PS01235">
    <property type="entry name" value="PDXS_SNZ_1"/>
    <property type="match status" value="1"/>
</dbReference>
<dbReference type="PROSITE" id="PS51129">
    <property type="entry name" value="PDXS_SNZ_2"/>
    <property type="match status" value="1"/>
</dbReference>
<comment type="function">
    <text evidence="1">Catalyzes the formation of pyridoxal 5'-phosphate from ribose 5-phosphate (RBP), glyceraldehyde 3-phosphate (G3P) and ammonia. The ammonia is provided by the PdxT subunit. Can also use ribulose 5-phosphate and dihydroxyacetone phosphate as substrates, resulting from enzyme-catalyzed isomerization of RBP and G3P, respectively.</text>
</comment>
<comment type="catalytic activity">
    <reaction evidence="1">
        <text>aldehydo-D-ribose 5-phosphate + D-glyceraldehyde 3-phosphate + L-glutamine = pyridoxal 5'-phosphate + L-glutamate + phosphate + 3 H2O + H(+)</text>
        <dbReference type="Rhea" id="RHEA:31507"/>
        <dbReference type="ChEBI" id="CHEBI:15377"/>
        <dbReference type="ChEBI" id="CHEBI:15378"/>
        <dbReference type="ChEBI" id="CHEBI:29985"/>
        <dbReference type="ChEBI" id="CHEBI:43474"/>
        <dbReference type="ChEBI" id="CHEBI:58273"/>
        <dbReference type="ChEBI" id="CHEBI:58359"/>
        <dbReference type="ChEBI" id="CHEBI:59776"/>
        <dbReference type="ChEBI" id="CHEBI:597326"/>
        <dbReference type="EC" id="4.3.3.6"/>
    </reaction>
</comment>
<comment type="pathway">
    <text evidence="1">Cofactor biosynthesis; pyridoxal 5'-phosphate biosynthesis.</text>
</comment>
<comment type="subunit">
    <text evidence="1">In the presence of PdxT, forms a dodecamer of heterodimers.</text>
</comment>
<comment type="induction">
    <text>By indole.</text>
</comment>
<comment type="similarity">
    <text evidence="1">Belongs to the PdxS/SNZ family.</text>
</comment>
<comment type="sequence caution" evidence="2">
    <conflict type="erroneous initiation">
        <sequence resource="EMBL-CDS" id="CAF19493"/>
    </conflict>
</comment>
<feature type="chain" id="PRO_0000109390" description="Pyridoxal 5'-phosphate synthase subunit PdxS">
    <location>
        <begin position="1"/>
        <end position="317"/>
    </location>
</feature>
<feature type="active site" description="Schiff-base intermediate with D-ribose 5-phosphate" evidence="1">
    <location>
        <position position="104"/>
    </location>
</feature>
<feature type="binding site" evidence="1">
    <location>
        <position position="47"/>
    </location>
    <ligand>
        <name>D-ribose 5-phosphate</name>
        <dbReference type="ChEBI" id="CHEBI:78346"/>
    </ligand>
</feature>
<feature type="binding site" evidence="1">
    <location>
        <position position="176"/>
    </location>
    <ligand>
        <name>D-ribose 5-phosphate</name>
        <dbReference type="ChEBI" id="CHEBI:78346"/>
    </ligand>
</feature>
<feature type="binding site" evidence="1">
    <location>
        <position position="188"/>
    </location>
    <ligand>
        <name>D-glyceraldehyde 3-phosphate</name>
        <dbReference type="ChEBI" id="CHEBI:59776"/>
    </ligand>
</feature>
<feature type="binding site" evidence="1">
    <location>
        <position position="237"/>
    </location>
    <ligand>
        <name>D-ribose 5-phosphate</name>
        <dbReference type="ChEBI" id="CHEBI:78346"/>
    </ligand>
</feature>
<feature type="binding site" evidence="1">
    <location>
        <begin position="258"/>
        <end position="259"/>
    </location>
    <ligand>
        <name>D-ribose 5-phosphate</name>
        <dbReference type="ChEBI" id="CHEBI:78346"/>
    </ligand>
</feature>
<feature type="sequence conflict" description="In Ref. 3; AA sequence." evidence="2" ref="3">
    <original>K</original>
    <variation>L</variation>
    <location>
        <position position="33"/>
    </location>
</feature>
<organism>
    <name type="scientific">Corynebacterium glutamicum (strain ATCC 13032 / DSM 20300 / JCM 1318 / BCRC 11384 / CCUG 27702 / LMG 3730 / NBRC 12168 / NCIMB 10025 / NRRL B-2784 / 534)</name>
    <dbReference type="NCBI Taxonomy" id="196627"/>
    <lineage>
        <taxon>Bacteria</taxon>
        <taxon>Bacillati</taxon>
        <taxon>Actinomycetota</taxon>
        <taxon>Actinomycetes</taxon>
        <taxon>Mycobacteriales</taxon>
        <taxon>Corynebacteriaceae</taxon>
        <taxon>Corynebacterium</taxon>
    </lineage>
</organism>